<organism>
    <name type="scientific">Parasponia rigida</name>
    <dbReference type="NCBI Taxonomy" id="3477"/>
    <lineage>
        <taxon>Eukaryota</taxon>
        <taxon>Viridiplantae</taxon>
        <taxon>Streptophyta</taxon>
        <taxon>Embryophyta</taxon>
        <taxon>Tracheophyta</taxon>
        <taxon>Spermatophyta</taxon>
        <taxon>Magnoliopsida</taxon>
        <taxon>eudicotyledons</taxon>
        <taxon>Gunneridae</taxon>
        <taxon>Pentapetalae</taxon>
        <taxon>rosids</taxon>
        <taxon>fabids</taxon>
        <taxon>Rosales</taxon>
        <taxon>Cannabaceae</taxon>
        <taxon>Parasponia</taxon>
    </lineage>
</organism>
<protein>
    <recommendedName>
        <fullName evidence="3">Anaerobic nitrite reductase</fullName>
        <ecNumber evidence="3">1.7.2.-</ecNumber>
    </recommendedName>
    <alternativeName>
        <fullName>Non-legume hemoglobin</fullName>
    </alternativeName>
</protein>
<evidence type="ECO:0000250" key="1">
    <source>
        <dbReference type="UniProtKB" id="A2XE98"/>
    </source>
</evidence>
<evidence type="ECO:0000250" key="2">
    <source>
        <dbReference type="UniProtKB" id="I3SPW2"/>
    </source>
</evidence>
<evidence type="ECO:0000250" key="3">
    <source>
        <dbReference type="UniProtKB" id="O04986"/>
    </source>
</evidence>
<evidence type="ECO:0000250" key="4">
    <source>
        <dbReference type="UniProtKB" id="P68168"/>
    </source>
</evidence>
<evidence type="ECO:0000250" key="5">
    <source>
        <dbReference type="UniProtKB" id="Q3C1F4"/>
    </source>
</evidence>
<evidence type="ECO:0000250" key="6">
    <source>
        <dbReference type="UniProtKB" id="Q42831"/>
    </source>
</evidence>
<evidence type="ECO:0000255" key="7">
    <source>
        <dbReference type="PROSITE-ProRule" id="PRU00238"/>
    </source>
</evidence>
<evidence type="ECO:0000269" key="8">
    <source>
    </source>
</evidence>
<evidence type="ECO:0000305" key="9"/>
<evidence type="ECO:0000305" key="10">
    <source>
    </source>
</evidence>
<dbReference type="EC" id="1.7.2.-" evidence="3"/>
<dbReference type="PIR" id="S01019">
    <property type="entry name" value="S01019"/>
</dbReference>
<dbReference type="PIR" id="S01020">
    <property type="entry name" value="S01020"/>
</dbReference>
<dbReference type="SMR" id="P68169"/>
<dbReference type="iPTMnet" id="P68169"/>
<dbReference type="GO" id="GO:0005737">
    <property type="term" value="C:cytoplasm"/>
    <property type="evidence" value="ECO:0007669"/>
    <property type="project" value="UniProtKB-SubCell"/>
</dbReference>
<dbReference type="GO" id="GO:0005634">
    <property type="term" value="C:nucleus"/>
    <property type="evidence" value="ECO:0007669"/>
    <property type="project" value="UniProtKB-SubCell"/>
</dbReference>
<dbReference type="GO" id="GO:0020037">
    <property type="term" value="F:heme binding"/>
    <property type="evidence" value="ECO:0007669"/>
    <property type="project" value="InterPro"/>
</dbReference>
<dbReference type="GO" id="GO:0046872">
    <property type="term" value="F:metal ion binding"/>
    <property type="evidence" value="ECO:0007669"/>
    <property type="project" value="UniProtKB-KW"/>
</dbReference>
<dbReference type="GO" id="GO:0016491">
    <property type="term" value="F:oxidoreductase activity"/>
    <property type="evidence" value="ECO:0007669"/>
    <property type="project" value="UniProtKB-KW"/>
</dbReference>
<dbReference type="GO" id="GO:0019825">
    <property type="term" value="F:oxygen binding"/>
    <property type="evidence" value="ECO:0007669"/>
    <property type="project" value="InterPro"/>
</dbReference>
<dbReference type="GO" id="GO:0005344">
    <property type="term" value="F:oxygen carrier activity"/>
    <property type="evidence" value="ECO:0007669"/>
    <property type="project" value="UniProtKB-KW"/>
</dbReference>
<dbReference type="CDD" id="cd14784">
    <property type="entry name" value="class1_nsHb-like"/>
    <property type="match status" value="1"/>
</dbReference>
<dbReference type="Gene3D" id="1.10.490.10">
    <property type="entry name" value="Globins"/>
    <property type="match status" value="1"/>
</dbReference>
<dbReference type="InterPro" id="IPR000971">
    <property type="entry name" value="Globin"/>
</dbReference>
<dbReference type="InterPro" id="IPR009050">
    <property type="entry name" value="Globin-like_sf"/>
</dbReference>
<dbReference type="InterPro" id="IPR012292">
    <property type="entry name" value="Globin/Proto"/>
</dbReference>
<dbReference type="InterPro" id="IPR001032">
    <property type="entry name" value="Leghaemoglobin-like"/>
</dbReference>
<dbReference type="InterPro" id="IPR019824">
    <property type="entry name" value="Leghaemoglobin_Fe_BS"/>
</dbReference>
<dbReference type="PANTHER" id="PTHR22924">
    <property type="entry name" value="LEGHEMOGLOBIN-RELATED"/>
    <property type="match status" value="1"/>
</dbReference>
<dbReference type="PANTHER" id="PTHR22924:SF39">
    <property type="entry name" value="NON-SYMBIOTIC HEMOGLOBIN 1"/>
    <property type="match status" value="1"/>
</dbReference>
<dbReference type="Pfam" id="PF00042">
    <property type="entry name" value="Globin"/>
    <property type="match status" value="1"/>
</dbReference>
<dbReference type="PRINTS" id="PR00188">
    <property type="entry name" value="PLANTGLOBIN"/>
</dbReference>
<dbReference type="SUPFAM" id="SSF46458">
    <property type="entry name" value="Globin-like"/>
    <property type="match status" value="1"/>
</dbReference>
<dbReference type="PROSITE" id="PS01033">
    <property type="entry name" value="GLOBIN"/>
    <property type="match status" value="1"/>
</dbReference>
<dbReference type="PROSITE" id="PS00208">
    <property type="entry name" value="PLANT_GLOBIN"/>
    <property type="match status" value="1"/>
</dbReference>
<name>HBPL_PARRI</name>
<accession>P68169</accession>
<accession>P04396</accession>
<reference key="1">
    <citation type="journal article" date="1988" name="Eur. J. Biochem.">
        <title>Amino acid sequences of hemoglobins I and II from root nodules of the non-leguminous Parasponia rigida-rhizobium symbiosis, and a correction of the sequence of hemoglobin I from Parasponia andersonii.</title>
        <authorList>
            <person name="Kortt A.A."/>
            <person name="Trinick M.J."/>
            <person name="Appleby C.A."/>
        </authorList>
    </citation>
    <scope>PROTEIN SEQUENCE OF 2-162</scope>
    <scope>POLYMORPHISM</scope>
    <scope>ACETYLATION AT SER-2</scope>
    <scope>VARIANTS ASP-31; GLN-86 AND VAL-151</scope>
    <scope>TISSUE SPECIFICITY</scope>
</reference>
<feature type="initiator methionine" description="Removed" evidence="8">
    <location>
        <position position="1"/>
    </location>
</feature>
<feature type="chain" id="PRO_0000192982" description="Anaerobic nitrite reductase">
    <location>
        <begin position="2"/>
        <end position="162"/>
    </location>
</feature>
<feature type="domain" description="Globin" evidence="7">
    <location>
        <begin position="9"/>
        <end position="158"/>
    </location>
</feature>
<feature type="short sequence motif" description="Homodimerization" evidence="3">
    <location>
        <begin position="42"/>
        <end position="46"/>
    </location>
</feature>
<feature type="short sequence motif" description="Homodimerization" evidence="3">
    <location>
        <begin position="112"/>
        <end position="124"/>
    </location>
</feature>
<feature type="binding site" evidence="4">
    <location>
        <position position="52"/>
    </location>
    <ligand>
        <name>heme b</name>
        <dbReference type="ChEBI" id="CHEBI:60344"/>
    </ligand>
</feature>
<feature type="binding site" evidence="3">
    <location>
        <position position="66"/>
    </location>
    <ligand>
        <name>heme b</name>
        <dbReference type="ChEBI" id="CHEBI:60344"/>
    </ligand>
</feature>
<feature type="binding site" description="distal binding residue" evidence="7">
    <location>
        <position position="70"/>
    </location>
    <ligand>
        <name>heme b</name>
        <dbReference type="ChEBI" id="CHEBI:60344"/>
    </ligand>
    <ligandPart>
        <name>Fe</name>
        <dbReference type="ChEBI" id="CHEBI:18248"/>
    </ligandPart>
</feature>
<feature type="binding site" evidence="3">
    <location>
        <position position="100"/>
    </location>
    <ligand>
        <name>heme b</name>
        <dbReference type="ChEBI" id="CHEBI:60344"/>
    </ligand>
</feature>
<feature type="binding site" description="proximal binding residue" evidence="7">
    <location>
        <position position="105"/>
    </location>
    <ligand>
        <name>heme b</name>
        <dbReference type="ChEBI" id="CHEBI:60344"/>
    </ligand>
    <ligandPart>
        <name>Fe</name>
        <dbReference type="ChEBI" id="CHEBI:18248"/>
    </ligandPart>
</feature>
<feature type="site" description="Homodimerization" evidence="3">
    <location>
        <position position="139"/>
    </location>
</feature>
<feature type="modified residue" description="N-acetylserine" evidence="8">
    <location>
        <position position="2"/>
    </location>
</feature>
<feature type="sequence variant" description="In 30 percent hemoglobin I and in hemoglobin II." evidence="8">
    <original>E</original>
    <variation>D</variation>
    <location>
        <position position="31"/>
    </location>
</feature>
<feature type="sequence variant" description="In hemoglobin II." evidence="8">
    <original>R</original>
    <variation>Q</variation>
    <location>
        <position position="86"/>
    </location>
</feature>
<feature type="sequence variant" description="In some hemoglobin I and in hemoglobin II." evidence="8">
    <original>A</original>
    <variation>V</variation>
    <location>
        <position position="151"/>
    </location>
</feature>
<proteinExistence type="evidence at protein level"/>
<keyword id="KW-0007">Acetylation</keyword>
<keyword id="KW-0963">Cytoplasm</keyword>
<keyword id="KW-0903">Direct protein sequencing</keyword>
<keyword id="KW-0349">Heme</keyword>
<keyword id="KW-0408">Iron</keyword>
<keyword id="KW-0479">Metal-binding</keyword>
<keyword id="KW-0535">Nitrogen fixation</keyword>
<keyword id="KW-0539">Nucleus</keyword>
<keyword id="KW-0560">Oxidoreductase</keyword>
<keyword id="KW-0561">Oxygen transport</keyword>
<keyword id="KW-0813">Transport</keyword>
<comment type="function">
    <text evidence="2 3 5 6">Phytoglobin that reduces nitrite to nitric oxide (NO) under anoxic conditions (e.g. during flooding or in waterlogged soil) and upon root nodulation (By similarity). Required for general plant development and during nodulation, especially for the onset of symbiosis (By similarity). Monitors nitric oxide (NO) levels during early phase of the nitrogen-fixing symbiosis and buffers oxygen in functioning nodules (By similarity). May not function as an oxygen storage or transport protein (By similarity). Has an unusually high affinity for O(2) through a hexacoordinate heme iron because of a very low dissociation constant (By similarity).</text>
</comment>
<comment type="catalytic activity">
    <reaction evidence="3">
        <text>Fe(III)-heme b-[protein] + nitric oxide + H2O = Fe(II)-heme b-[protein] + nitrite + 2 H(+)</text>
        <dbReference type="Rhea" id="RHEA:77711"/>
        <dbReference type="Rhea" id="RHEA-COMP:18975"/>
        <dbReference type="Rhea" id="RHEA-COMP:18976"/>
        <dbReference type="ChEBI" id="CHEBI:15377"/>
        <dbReference type="ChEBI" id="CHEBI:15378"/>
        <dbReference type="ChEBI" id="CHEBI:16301"/>
        <dbReference type="ChEBI" id="CHEBI:16480"/>
        <dbReference type="ChEBI" id="CHEBI:55376"/>
        <dbReference type="ChEBI" id="CHEBI:60344"/>
    </reaction>
    <physiologicalReaction direction="right-to-left" evidence="3">
        <dbReference type="Rhea" id="RHEA:77713"/>
    </physiologicalReaction>
</comment>
<comment type="cofactor">
    <cofactor evidence="4">
        <name>heme b</name>
        <dbReference type="ChEBI" id="CHEBI:60344"/>
    </cofactor>
    <text evidence="4">Binds 1 heme group per subunit.</text>
</comment>
<comment type="subunit">
    <text evidence="3">Homodimer.</text>
</comment>
<comment type="subcellular location">
    <subcellularLocation>
        <location evidence="1">Cytoplasm</location>
    </subcellularLocation>
    <subcellularLocation>
        <location evidence="1">Nucleus</location>
    </subcellularLocation>
</comment>
<comment type="tissue specificity">
    <text evidence="10">Root nodules.</text>
</comment>
<comment type="polymorphism">
    <text evidence="8">Two variants of the protein are called hemoglobin I and hemoglobin II.</text>
</comment>
<comment type="similarity">
    <text evidence="9">Belongs to the plant globin family.</text>
</comment>
<sequence length="162" mass="18150">MSSSEVNKVFTEEQEALVVKAWAVMKKNSAELGLQFFLKIFEIAPSAKNLFSYLKDSPVPLEQNPKLKPHATTVFVMTCESAVQLRKAGKATVKESDLKRIGAIHFKTGVVNEHFEVTRFALLETIKEAVPEMWSPEMKNAWGVAYDQLVAAIKFEMKPSST</sequence>